<reference key="1">
    <citation type="journal article" date="2006" name="PLoS Biol.">
        <title>Metabolic complementarity and genomics of the dual bacterial symbiosis of sharpshooters.</title>
        <authorList>
            <person name="Wu D."/>
            <person name="Daugherty S.C."/>
            <person name="Van Aken S.E."/>
            <person name="Pai G.H."/>
            <person name="Watkins K.L."/>
            <person name="Khouri H."/>
            <person name="Tallon L.J."/>
            <person name="Zaborsky J.M."/>
            <person name="Dunbar H.E."/>
            <person name="Tran P.L."/>
            <person name="Moran N.A."/>
            <person name="Eisen J.A."/>
        </authorList>
    </citation>
    <scope>NUCLEOTIDE SEQUENCE [LARGE SCALE GENOMIC DNA]</scope>
</reference>
<organism>
    <name type="scientific">Baumannia cicadellinicola subsp. Homalodisca coagulata</name>
    <dbReference type="NCBI Taxonomy" id="374463"/>
    <lineage>
        <taxon>Bacteria</taxon>
        <taxon>Pseudomonadati</taxon>
        <taxon>Pseudomonadota</taxon>
        <taxon>Gammaproteobacteria</taxon>
        <taxon>Candidatus Palibaumannia</taxon>
    </lineage>
</organism>
<evidence type="ECO:0000255" key="1">
    <source>
        <dbReference type="HAMAP-Rule" id="MF_00736"/>
    </source>
</evidence>
<evidence type="ECO:0000305" key="2"/>
<sequence>MAKKVQAYVKLQVAAGMANPSPPVGPALGQQGVNIMEFCKIFNLQTENFEKGLPIPVIITVYSDRSFTFIIKTPPAAVLLSKAAGIKSGANQPKKEQVGKVTYSQIREIAEKKVADMNSNNIEAISRSILGTALSMGLIVEG</sequence>
<accession>Q1LSY1</accession>
<proteinExistence type="inferred from homology"/>
<name>RL11_BAUCH</name>
<feature type="chain" id="PRO_0000258123" description="Large ribosomal subunit protein uL11">
    <location>
        <begin position="1"/>
        <end position="142"/>
    </location>
</feature>
<comment type="function">
    <text evidence="1">Forms part of the ribosomal stalk which helps the ribosome interact with GTP-bound translation factors.</text>
</comment>
<comment type="subunit">
    <text evidence="1">Part of the ribosomal stalk of the 50S ribosomal subunit. Interacts with L10 and the large rRNA to form the base of the stalk. L10 forms an elongated spine to which L12 dimers bind in a sequential fashion forming a multimeric L10(L12)X complex.</text>
</comment>
<comment type="PTM">
    <text evidence="1">One or more lysine residues are methylated.</text>
</comment>
<comment type="similarity">
    <text evidence="1">Belongs to the universal ribosomal protein uL11 family.</text>
</comment>
<gene>
    <name evidence="1" type="primary">rplK</name>
    <name type="ordered locus">BCI_0498</name>
</gene>
<protein>
    <recommendedName>
        <fullName evidence="1">Large ribosomal subunit protein uL11</fullName>
    </recommendedName>
    <alternativeName>
        <fullName evidence="2">50S ribosomal protein L11</fullName>
    </alternativeName>
</protein>
<dbReference type="EMBL" id="CP000238">
    <property type="protein sequence ID" value="ABF14167.1"/>
    <property type="molecule type" value="Genomic_DNA"/>
</dbReference>
<dbReference type="RefSeq" id="WP_011520666.1">
    <property type="nucleotide sequence ID" value="NC_007984.1"/>
</dbReference>
<dbReference type="SMR" id="Q1LSY1"/>
<dbReference type="STRING" id="374463.BCI_0498"/>
<dbReference type="KEGG" id="bci:BCI_0498"/>
<dbReference type="HOGENOM" id="CLU_074237_2_0_6"/>
<dbReference type="OrthoDB" id="9802408at2"/>
<dbReference type="Proteomes" id="UP000002427">
    <property type="component" value="Chromosome"/>
</dbReference>
<dbReference type="GO" id="GO:0022625">
    <property type="term" value="C:cytosolic large ribosomal subunit"/>
    <property type="evidence" value="ECO:0007669"/>
    <property type="project" value="TreeGrafter"/>
</dbReference>
<dbReference type="GO" id="GO:0070180">
    <property type="term" value="F:large ribosomal subunit rRNA binding"/>
    <property type="evidence" value="ECO:0007669"/>
    <property type="project" value="UniProtKB-UniRule"/>
</dbReference>
<dbReference type="GO" id="GO:0003735">
    <property type="term" value="F:structural constituent of ribosome"/>
    <property type="evidence" value="ECO:0007669"/>
    <property type="project" value="InterPro"/>
</dbReference>
<dbReference type="GO" id="GO:0006412">
    <property type="term" value="P:translation"/>
    <property type="evidence" value="ECO:0007669"/>
    <property type="project" value="UniProtKB-UniRule"/>
</dbReference>
<dbReference type="CDD" id="cd00349">
    <property type="entry name" value="Ribosomal_L11"/>
    <property type="match status" value="1"/>
</dbReference>
<dbReference type="FunFam" id="1.10.10.250:FF:000001">
    <property type="entry name" value="50S ribosomal protein L11"/>
    <property type="match status" value="1"/>
</dbReference>
<dbReference type="FunFam" id="3.30.1550.10:FF:000001">
    <property type="entry name" value="50S ribosomal protein L11"/>
    <property type="match status" value="1"/>
</dbReference>
<dbReference type="Gene3D" id="1.10.10.250">
    <property type="entry name" value="Ribosomal protein L11, C-terminal domain"/>
    <property type="match status" value="1"/>
</dbReference>
<dbReference type="Gene3D" id="3.30.1550.10">
    <property type="entry name" value="Ribosomal protein L11/L12, N-terminal domain"/>
    <property type="match status" value="1"/>
</dbReference>
<dbReference type="HAMAP" id="MF_00736">
    <property type="entry name" value="Ribosomal_uL11"/>
    <property type="match status" value="1"/>
</dbReference>
<dbReference type="InterPro" id="IPR000911">
    <property type="entry name" value="Ribosomal_uL11"/>
</dbReference>
<dbReference type="InterPro" id="IPR006519">
    <property type="entry name" value="Ribosomal_uL11_bac-typ"/>
</dbReference>
<dbReference type="InterPro" id="IPR020783">
    <property type="entry name" value="Ribosomal_uL11_C"/>
</dbReference>
<dbReference type="InterPro" id="IPR036769">
    <property type="entry name" value="Ribosomal_uL11_C_sf"/>
</dbReference>
<dbReference type="InterPro" id="IPR020785">
    <property type="entry name" value="Ribosomal_uL11_CS"/>
</dbReference>
<dbReference type="InterPro" id="IPR020784">
    <property type="entry name" value="Ribosomal_uL11_N"/>
</dbReference>
<dbReference type="InterPro" id="IPR036796">
    <property type="entry name" value="Ribosomal_uL11_N_sf"/>
</dbReference>
<dbReference type="NCBIfam" id="TIGR01632">
    <property type="entry name" value="L11_bact"/>
    <property type="match status" value="1"/>
</dbReference>
<dbReference type="PANTHER" id="PTHR11661">
    <property type="entry name" value="60S RIBOSOMAL PROTEIN L12"/>
    <property type="match status" value="1"/>
</dbReference>
<dbReference type="PANTHER" id="PTHR11661:SF1">
    <property type="entry name" value="LARGE RIBOSOMAL SUBUNIT PROTEIN UL11M"/>
    <property type="match status" value="1"/>
</dbReference>
<dbReference type="Pfam" id="PF00298">
    <property type="entry name" value="Ribosomal_L11"/>
    <property type="match status" value="1"/>
</dbReference>
<dbReference type="Pfam" id="PF03946">
    <property type="entry name" value="Ribosomal_L11_N"/>
    <property type="match status" value="1"/>
</dbReference>
<dbReference type="SMART" id="SM00649">
    <property type="entry name" value="RL11"/>
    <property type="match status" value="1"/>
</dbReference>
<dbReference type="SUPFAM" id="SSF54747">
    <property type="entry name" value="Ribosomal L11/L12e N-terminal domain"/>
    <property type="match status" value="1"/>
</dbReference>
<dbReference type="SUPFAM" id="SSF46906">
    <property type="entry name" value="Ribosomal protein L11, C-terminal domain"/>
    <property type="match status" value="1"/>
</dbReference>
<dbReference type="PROSITE" id="PS00359">
    <property type="entry name" value="RIBOSOMAL_L11"/>
    <property type="match status" value="1"/>
</dbReference>
<keyword id="KW-0488">Methylation</keyword>
<keyword id="KW-1185">Reference proteome</keyword>
<keyword id="KW-0687">Ribonucleoprotein</keyword>
<keyword id="KW-0689">Ribosomal protein</keyword>
<keyword id="KW-0694">RNA-binding</keyword>
<keyword id="KW-0699">rRNA-binding</keyword>